<sequence>MNSMKTEENKSFSAMEDDQRTRPEVSKDTVMKQTHADTPVDHCLSGIRKCSSTFKLKSEVNKHETALEMQNPNLNNKECCFTFTLNGNSRKLDRSVFTAYGKPSESIYSALSANDYFSERIKNQFNKNIIVYEEKTIDGHINLGMPLKCLPSDSHFKITFGQRKSSKEDGHILRQCENPNMECILFHVVAIGRTRKKIVKINELHEKGSKLCIYALKGETIEGALCKDGRFRSDIGEFEWKLKEGHKKIYGKQSMVDEVSGKVLEMDISKKKALQQKDIHKKIKQNESATDEINHQSLIQSKKKVHKPKKDGETKDVEHSREQILPPQDLSHYIKDKTRQTIPRIRNYYFCSLPRKYRQINSQVRRRPHLGRRYAINLDVQKEAINLLKNYQTLNEAIMHQYPNFKEEAQWVRKYFREEQKRMNLSPAKQFNIYKKDFGKMTANSVSVATCEQLTYYSKSVGFMQWDNNGNTGNATCFVFNGGYIFTCRHVVHLMVGKNTHPSLWPDIISKCAKVTFTYTEFCPTPDNWFSIEPWLKVSNENLDYAILKLKENGNAFPPGLWRQISPQPSTGLIYLIGHPEGQIKKIDGCTVIPLNERLKKYPNDCQDGLVDLYDTTSNVYCMFTQRSFLSEVWNTHTLSYDTCFSDGSSGSPVFNASGKLVALHTFGLFYQRGFNVHALIEFGYSMDSILCDIKKTNESLYKSLNDEKLETYDEEKGKQESSLQDHQIEPMEC</sequence>
<feature type="chain" id="PRO_0000274409" description="Serine protease FAM111B">
    <location>
        <begin position="1"/>
        <end position="734"/>
    </location>
</feature>
<feature type="region of interest" description="Disordered" evidence="3">
    <location>
        <begin position="1"/>
        <end position="32"/>
    </location>
</feature>
<feature type="region of interest" description="Disordered" evidence="3">
    <location>
        <begin position="285"/>
        <end position="321"/>
    </location>
</feature>
<feature type="region of interest" description="Disordered" evidence="3">
    <location>
        <begin position="712"/>
        <end position="734"/>
    </location>
</feature>
<feature type="compositionally biased region" description="Basic and acidic residues" evidence="3">
    <location>
        <begin position="1"/>
        <end position="10"/>
    </location>
</feature>
<feature type="compositionally biased region" description="Basic and acidic residues" evidence="3">
    <location>
        <begin position="17"/>
        <end position="32"/>
    </location>
</feature>
<feature type="compositionally biased region" description="Basic and acidic residues" evidence="3">
    <location>
        <begin position="310"/>
        <end position="321"/>
    </location>
</feature>
<feature type="active site" description="Charge relay system" evidence="1">
    <location>
        <position position="490"/>
    </location>
</feature>
<feature type="active site" description="Charge relay system" evidence="1">
    <location>
        <position position="544"/>
    </location>
</feature>
<feature type="active site" description="Charge relay system" evidence="2">
    <location>
        <position position="650"/>
    </location>
</feature>
<feature type="modified residue" description="N-acetylmethionine" evidence="9">
    <location>
        <position position="1"/>
    </location>
</feature>
<feature type="cross-link" description="Glycyl lysine isopeptide (Lys-Gly) (interchain with G-Cter in SUMO2)" evidence="10">
    <location>
        <position position="284"/>
    </location>
</feature>
<feature type="splice variant" id="VSP_022739" description="In isoform 2." evidence="5">
    <location>
        <begin position="1"/>
        <end position="30"/>
    </location>
</feature>
<feature type="sequence variant" id="VAR_053821" description="In dbSNP:rs1060428.">
    <original>G</original>
    <variation>D</variation>
    <location>
        <position position="218"/>
    </location>
</feature>
<feature type="sequence variant" id="VAR_070953" description="In POIKTMP; dbSNP:rs587777236." evidence="4">
    <original>Y</original>
    <variation>D</variation>
    <location>
        <position position="621"/>
    </location>
</feature>
<feature type="sequence variant" id="VAR_070954" description="In POIKTMP; dbSNP:rs587777237." evidence="4">
    <original>R</original>
    <variation>G</variation>
    <location>
        <position position="627"/>
    </location>
</feature>
<feature type="sequence variant" id="VAR_070955" description="In POIKTMP; dbSNP:rs587777238." evidence="4">
    <original>S</original>
    <variation>N</variation>
    <location>
        <position position="628"/>
    </location>
</feature>
<feature type="sequence variant" id="VAR_030282" description="In dbSNP:rs17153376.">
    <original>P</original>
    <variation>A</variation>
    <location>
        <position position="731"/>
    </location>
</feature>
<feature type="sequence conflict" description="In Ref. 3; AAH62456." evidence="7" ref="3">
    <original>S</original>
    <variation>G</variation>
    <location>
        <position position="104"/>
    </location>
</feature>
<name>F111B_HUMAN</name>
<proteinExistence type="evidence at protein level"/>
<accession>Q6SJ93</accession>
<accession>B4E2G2</accession>
<accession>Q6P661</accession>
<keyword id="KW-0007">Acetylation</keyword>
<keyword id="KW-0025">Alternative splicing</keyword>
<keyword id="KW-0225">Disease variant</keyword>
<keyword id="KW-0378">Hydrolase</keyword>
<keyword id="KW-1017">Isopeptide bond</keyword>
<keyword id="KW-0645">Protease</keyword>
<keyword id="KW-1267">Proteomics identification</keyword>
<keyword id="KW-1185">Reference proteome</keyword>
<keyword id="KW-0832">Ubl conjugation</keyword>
<reference key="1">
    <citation type="submission" date="2003-11" db="EMBL/GenBank/DDBJ databases">
        <title>Molecular characterization and cloning of a cancer associated nucleoprotein in hepatocellular carcinoma.</title>
        <authorList>
            <person name="Liu S.-H."/>
            <person name="Pan H.-W."/>
            <person name="Hsu H.-C."/>
        </authorList>
    </citation>
    <scope>NUCLEOTIDE SEQUENCE [MRNA] (ISOFORM 1)</scope>
</reference>
<reference key="2">
    <citation type="journal article" date="2004" name="Nat. Genet.">
        <title>Complete sequencing and characterization of 21,243 full-length human cDNAs.</title>
        <authorList>
            <person name="Ota T."/>
            <person name="Suzuki Y."/>
            <person name="Nishikawa T."/>
            <person name="Otsuki T."/>
            <person name="Sugiyama T."/>
            <person name="Irie R."/>
            <person name="Wakamatsu A."/>
            <person name="Hayashi K."/>
            <person name="Sato H."/>
            <person name="Nagai K."/>
            <person name="Kimura K."/>
            <person name="Makita H."/>
            <person name="Sekine M."/>
            <person name="Obayashi M."/>
            <person name="Nishi T."/>
            <person name="Shibahara T."/>
            <person name="Tanaka T."/>
            <person name="Ishii S."/>
            <person name="Yamamoto J."/>
            <person name="Saito K."/>
            <person name="Kawai Y."/>
            <person name="Isono Y."/>
            <person name="Nakamura Y."/>
            <person name="Nagahari K."/>
            <person name="Murakami K."/>
            <person name="Yasuda T."/>
            <person name="Iwayanagi T."/>
            <person name="Wagatsuma M."/>
            <person name="Shiratori A."/>
            <person name="Sudo H."/>
            <person name="Hosoiri T."/>
            <person name="Kaku Y."/>
            <person name="Kodaira H."/>
            <person name="Kondo H."/>
            <person name="Sugawara M."/>
            <person name="Takahashi M."/>
            <person name="Kanda K."/>
            <person name="Yokoi T."/>
            <person name="Furuya T."/>
            <person name="Kikkawa E."/>
            <person name="Omura Y."/>
            <person name="Abe K."/>
            <person name="Kamihara K."/>
            <person name="Katsuta N."/>
            <person name="Sato K."/>
            <person name="Tanikawa M."/>
            <person name="Yamazaki M."/>
            <person name="Ninomiya K."/>
            <person name="Ishibashi T."/>
            <person name="Yamashita H."/>
            <person name="Murakawa K."/>
            <person name="Fujimori K."/>
            <person name="Tanai H."/>
            <person name="Kimata M."/>
            <person name="Watanabe M."/>
            <person name="Hiraoka S."/>
            <person name="Chiba Y."/>
            <person name="Ishida S."/>
            <person name="Ono Y."/>
            <person name="Takiguchi S."/>
            <person name="Watanabe S."/>
            <person name="Yosida M."/>
            <person name="Hotuta T."/>
            <person name="Kusano J."/>
            <person name="Kanehori K."/>
            <person name="Takahashi-Fujii A."/>
            <person name="Hara H."/>
            <person name="Tanase T.-O."/>
            <person name="Nomura Y."/>
            <person name="Togiya S."/>
            <person name="Komai F."/>
            <person name="Hara R."/>
            <person name="Takeuchi K."/>
            <person name="Arita M."/>
            <person name="Imose N."/>
            <person name="Musashino K."/>
            <person name="Yuuki H."/>
            <person name="Oshima A."/>
            <person name="Sasaki N."/>
            <person name="Aotsuka S."/>
            <person name="Yoshikawa Y."/>
            <person name="Matsunawa H."/>
            <person name="Ichihara T."/>
            <person name="Shiohata N."/>
            <person name="Sano S."/>
            <person name="Moriya S."/>
            <person name="Momiyama H."/>
            <person name="Satoh N."/>
            <person name="Takami S."/>
            <person name="Terashima Y."/>
            <person name="Suzuki O."/>
            <person name="Nakagawa S."/>
            <person name="Senoh A."/>
            <person name="Mizoguchi H."/>
            <person name="Goto Y."/>
            <person name="Shimizu F."/>
            <person name="Wakebe H."/>
            <person name="Hishigaki H."/>
            <person name="Watanabe T."/>
            <person name="Sugiyama A."/>
            <person name="Takemoto M."/>
            <person name="Kawakami B."/>
            <person name="Yamazaki M."/>
            <person name="Watanabe K."/>
            <person name="Kumagai A."/>
            <person name="Itakura S."/>
            <person name="Fukuzumi Y."/>
            <person name="Fujimori Y."/>
            <person name="Komiyama M."/>
            <person name="Tashiro H."/>
            <person name="Tanigami A."/>
            <person name="Fujiwara T."/>
            <person name="Ono T."/>
            <person name="Yamada K."/>
            <person name="Fujii Y."/>
            <person name="Ozaki K."/>
            <person name="Hirao M."/>
            <person name="Ohmori Y."/>
            <person name="Kawabata A."/>
            <person name="Hikiji T."/>
            <person name="Kobatake N."/>
            <person name="Inagaki H."/>
            <person name="Ikema Y."/>
            <person name="Okamoto S."/>
            <person name="Okitani R."/>
            <person name="Kawakami T."/>
            <person name="Noguchi S."/>
            <person name="Itoh T."/>
            <person name="Shigeta K."/>
            <person name="Senba T."/>
            <person name="Matsumura K."/>
            <person name="Nakajima Y."/>
            <person name="Mizuno T."/>
            <person name="Morinaga M."/>
            <person name="Sasaki M."/>
            <person name="Togashi T."/>
            <person name="Oyama M."/>
            <person name="Hata H."/>
            <person name="Watanabe M."/>
            <person name="Komatsu T."/>
            <person name="Mizushima-Sugano J."/>
            <person name="Satoh T."/>
            <person name="Shirai Y."/>
            <person name="Takahashi Y."/>
            <person name="Nakagawa K."/>
            <person name="Okumura K."/>
            <person name="Nagase T."/>
            <person name="Nomura N."/>
            <person name="Kikuchi H."/>
            <person name="Masuho Y."/>
            <person name="Yamashita R."/>
            <person name="Nakai K."/>
            <person name="Yada T."/>
            <person name="Nakamura Y."/>
            <person name="Ohara O."/>
            <person name="Isogai T."/>
            <person name="Sugano S."/>
        </authorList>
    </citation>
    <scope>NUCLEOTIDE SEQUENCE [LARGE SCALE MRNA] (ISOFORM 1)</scope>
    <source>
        <tissue>Trachea</tissue>
    </source>
</reference>
<reference key="3">
    <citation type="journal article" date="2004" name="Genome Res.">
        <title>The status, quality, and expansion of the NIH full-length cDNA project: the Mammalian Gene Collection (MGC).</title>
        <authorList>
            <consortium name="The MGC Project Team"/>
        </authorList>
    </citation>
    <scope>NUCLEOTIDE SEQUENCE [LARGE SCALE MRNA] (ISOFORM 1)</scope>
    <scope>NUCLEOTIDE SEQUENCE [LARGE SCALE MRNA] OF 1-270 (ISOFORM 2)</scope>
    <source>
        <tissue>Testis</tissue>
    </source>
</reference>
<reference key="4">
    <citation type="journal article" date="2012" name="Proc. Natl. Acad. Sci. U.S.A.">
        <title>N-terminal acetylome analyses and functional insights of the N-terminal acetyltransferase NatB.</title>
        <authorList>
            <person name="Van Damme P."/>
            <person name="Lasa M."/>
            <person name="Polevoda B."/>
            <person name="Gazquez C."/>
            <person name="Elosegui-Artola A."/>
            <person name="Kim D.S."/>
            <person name="De Juan-Pardo E."/>
            <person name="Demeyer K."/>
            <person name="Hole K."/>
            <person name="Larrea E."/>
            <person name="Timmerman E."/>
            <person name="Prieto J."/>
            <person name="Arnesen T."/>
            <person name="Sherman F."/>
            <person name="Gevaert K."/>
            <person name="Aldabe R."/>
        </authorList>
    </citation>
    <scope>ACETYLATION [LARGE SCALE ANALYSIS] AT MET-1</scope>
    <scope>IDENTIFICATION BY MASS SPECTROMETRY [LARGE SCALE ANALYSIS]</scope>
</reference>
<reference key="5">
    <citation type="journal article" date="2017" name="Nat. Struct. Mol. Biol.">
        <title>Site-specific mapping of the human SUMO proteome reveals co-modification with phosphorylation.</title>
        <authorList>
            <person name="Hendriks I.A."/>
            <person name="Lyon D."/>
            <person name="Young C."/>
            <person name="Jensen L.J."/>
            <person name="Vertegaal A.C."/>
            <person name="Nielsen M.L."/>
        </authorList>
    </citation>
    <scope>SUMOYLATION [LARGE SCALE ANALYSIS] AT LYS-284</scope>
    <scope>IDENTIFICATION BY MASS SPECTROMETRY [LARGE SCALE ANALYSIS]</scope>
</reference>
<reference key="6">
    <citation type="journal article" date="2013" name="Am. J. Hum. Genet.">
        <title>Mutations in FAM111B cause hereditary fibrosing poikiloderma with tendon contracture, myopathy, and pulmonary fibrosis.</title>
        <authorList>
            <person name="Mercier S."/>
            <person name="Kury S."/>
            <person name="Shaboodien G."/>
            <person name="Houniet D.T."/>
            <person name="Khumalo N.P."/>
            <person name="Bou-Hanna C."/>
            <person name="Bodak N."/>
            <person name="Cormier-Daire V."/>
            <person name="David A."/>
            <person name="Faivre L."/>
            <person name="Figarella-Branger D."/>
            <person name="Gherardi R.K."/>
            <person name="Glen E."/>
            <person name="Hamel A."/>
            <person name="Laboisse C."/>
            <person name="Le Caignec C."/>
            <person name="Lindenbaum P."/>
            <person name="Magot A."/>
            <person name="Munnich A."/>
            <person name="Mussini J.M."/>
            <person name="Pillay K."/>
            <person name="Rahman T."/>
            <person name="Redon R."/>
            <person name="Salort-Campana E."/>
            <person name="Santibanez-Koref M."/>
            <person name="Thauvin C."/>
            <person name="Barbarot S."/>
            <person name="Keavney B."/>
            <person name="Bezieau S."/>
            <person name="Mayosi B.M."/>
        </authorList>
    </citation>
    <scope>VARIANTS POIKTMP ASP-621; GLY-627 AND ASN-628</scope>
    <scope>TISSUE SPECIFICITY</scope>
</reference>
<dbReference type="EC" id="3.4.21.-" evidence="2"/>
<dbReference type="EMBL" id="AY457926">
    <property type="protein sequence ID" value="AAR20839.1"/>
    <property type="molecule type" value="mRNA"/>
</dbReference>
<dbReference type="EMBL" id="AK304258">
    <property type="protein sequence ID" value="BAG65124.1"/>
    <property type="molecule type" value="mRNA"/>
</dbReference>
<dbReference type="EMBL" id="BC062456">
    <property type="protein sequence ID" value="AAH62456.1"/>
    <property type="status" value="ALT_SEQ"/>
    <property type="molecule type" value="mRNA"/>
</dbReference>
<dbReference type="EMBL" id="BC130513">
    <property type="protein sequence ID" value="AAI30514.1"/>
    <property type="molecule type" value="mRNA"/>
</dbReference>
<dbReference type="EMBL" id="BC130539">
    <property type="protein sequence ID" value="AAI30540.1"/>
    <property type="molecule type" value="mRNA"/>
</dbReference>
<dbReference type="CCDS" id="CCDS44611.1">
    <molecule id="Q6SJ93-2"/>
</dbReference>
<dbReference type="CCDS" id="CCDS7972.1">
    <molecule id="Q6SJ93-1"/>
</dbReference>
<dbReference type="RefSeq" id="NP_001136175.1">
    <molecule id="Q6SJ93-2"/>
    <property type="nucleotide sequence ID" value="NM_001142703.2"/>
</dbReference>
<dbReference type="RefSeq" id="NP_001136176.1">
    <molecule id="Q6SJ93-2"/>
    <property type="nucleotide sequence ID" value="NM_001142704.2"/>
</dbReference>
<dbReference type="RefSeq" id="NP_945185.1">
    <molecule id="Q6SJ93-1"/>
    <property type="nucleotide sequence ID" value="NM_198947.4"/>
</dbReference>
<dbReference type="SMR" id="Q6SJ93"/>
<dbReference type="BioGRID" id="131897">
    <property type="interactions" value="37"/>
</dbReference>
<dbReference type="FunCoup" id="Q6SJ93">
    <property type="interactions" value="832"/>
</dbReference>
<dbReference type="IntAct" id="Q6SJ93">
    <property type="interactions" value="22"/>
</dbReference>
<dbReference type="MINT" id="Q6SJ93"/>
<dbReference type="STRING" id="9606.ENSP00000341565"/>
<dbReference type="MEROPS" id="S01.531"/>
<dbReference type="GlyGen" id="Q6SJ93">
    <property type="glycosylation" value="1 site, 1 O-linked glycan (1 site)"/>
</dbReference>
<dbReference type="iPTMnet" id="Q6SJ93"/>
<dbReference type="PhosphoSitePlus" id="Q6SJ93"/>
<dbReference type="BioMuta" id="FAM111B"/>
<dbReference type="DMDM" id="74758524"/>
<dbReference type="jPOST" id="Q6SJ93"/>
<dbReference type="MassIVE" id="Q6SJ93"/>
<dbReference type="PaxDb" id="9606-ENSP00000341565"/>
<dbReference type="PeptideAtlas" id="Q6SJ93"/>
<dbReference type="ProteomicsDB" id="67356">
    <molecule id="Q6SJ93-1"/>
</dbReference>
<dbReference type="ProteomicsDB" id="67357">
    <molecule id="Q6SJ93-2"/>
</dbReference>
<dbReference type="Pumba" id="Q6SJ93"/>
<dbReference type="Antibodypedia" id="27706">
    <property type="antibodies" value="113 antibodies from 25 providers"/>
</dbReference>
<dbReference type="DNASU" id="374393"/>
<dbReference type="Ensembl" id="ENST00000343597.4">
    <molecule id="Q6SJ93-1"/>
    <property type="protein sequence ID" value="ENSP00000341565.3"/>
    <property type="gene ID" value="ENSG00000189057.11"/>
</dbReference>
<dbReference type="Ensembl" id="ENST00000411426.1">
    <molecule id="Q6SJ93-2"/>
    <property type="protein sequence ID" value="ENSP00000393855.1"/>
    <property type="gene ID" value="ENSG00000189057.11"/>
</dbReference>
<dbReference type="Ensembl" id="ENST00000529618.5">
    <molecule id="Q6SJ93-2"/>
    <property type="protein sequence ID" value="ENSP00000432875.1"/>
    <property type="gene ID" value="ENSG00000189057.11"/>
</dbReference>
<dbReference type="Ensembl" id="ENST00000620384.1">
    <molecule id="Q6SJ93-1"/>
    <property type="protein sequence ID" value="ENSP00000483456.1"/>
    <property type="gene ID" value="ENSG00000189057.11"/>
</dbReference>
<dbReference type="GeneID" id="374393"/>
<dbReference type="KEGG" id="hsa:374393"/>
<dbReference type="MANE-Select" id="ENST00000343597.4">
    <property type="protein sequence ID" value="ENSP00000341565.3"/>
    <property type="RefSeq nucleotide sequence ID" value="NM_198947.4"/>
    <property type="RefSeq protein sequence ID" value="NP_945185.1"/>
</dbReference>
<dbReference type="UCSC" id="uc001nnl.5">
    <molecule id="Q6SJ93-1"/>
    <property type="organism name" value="human"/>
</dbReference>
<dbReference type="AGR" id="HGNC:24200"/>
<dbReference type="CTD" id="374393"/>
<dbReference type="DisGeNET" id="374393"/>
<dbReference type="GeneCards" id="FAM111B"/>
<dbReference type="GeneReviews" id="FAM111B"/>
<dbReference type="HGNC" id="HGNC:24200">
    <property type="gene designation" value="FAM111B"/>
</dbReference>
<dbReference type="HPA" id="ENSG00000189057">
    <property type="expression patterns" value="Tissue enhanced (lymphoid)"/>
</dbReference>
<dbReference type="MalaCards" id="FAM111B"/>
<dbReference type="MIM" id="615584">
    <property type="type" value="gene"/>
</dbReference>
<dbReference type="MIM" id="615704">
    <property type="type" value="phenotype"/>
</dbReference>
<dbReference type="neXtProt" id="NX_Q6SJ93"/>
<dbReference type="OpenTargets" id="ENSG00000189057"/>
<dbReference type="Orphanet" id="221043">
    <property type="disease" value="Hereditary fibrosing poikiloderma-tendon contractures-myopathy-pulmonary fibrosis syndrome"/>
</dbReference>
<dbReference type="PharmGKB" id="PA143485469"/>
<dbReference type="VEuPathDB" id="HostDB:ENSG00000189057"/>
<dbReference type="eggNOG" id="ENOG502QTFX">
    <property type="taxonomic scope" value="Eukaryota"/>
</dbReference>
<dbReference type="GeneTree" id="ENSGT00390000005182"/>
<dbReference type="HOGENOM" id="CLU_022719_0_0_1"/>
<dbReference type="InParanoid" id="Q6SJ93"/>
<dbReference type="OMA" id="LCDIKQK"/>
<dbReference type="OrthoDB" id="10025068at2759"/>
<dbReference type="PAN-GO" id="Q6SJ93">
    <property type="GO annotations" value="3 GO annotations based on evolutionary models"/>
</dbReference>
<dbReference type="PhylomeDB" id="Q6SJ93"/>
<dbReference type="TreeFam" id="TF332538"/>
<dbReference type="PathwayCommons" id="Q6SJ93"/>
<dbReference type="SignaLink" id="Q6SJ93"/>
<dbReference type="BioGRID-ORCS" id="374393">
    <property type="hits" value="8 hits in 1144 CRISPR screens"/>
</dbReference>
<dbReference type="GenomeRNAi" id="374393"/>
<dbReference type="Pharos" id="Q6SJ93">
    <property type="development level" value="Tbio"/>
</dbReference>
<dbReference type="PRO" id="PR:Q6SJ93"/>
<dbReference type="Proteomes" id="UP000005640">
    <property type="component" value="Chromosome 11"/>
</dbReference>
<dbReference type="RNAct" id="Q6SJ93">
    <property type="molecule type" value="protein"/>
</dbReference>
<dbReference type="Bgee" id="ENSG00000189057">
    <property type="expression patterns" value="Expressed in secondary oocyte and 91 other cell types or tissues"/>
</dbReference>
<dbReference type="ExpressionAtlas" id="Q6SJ93">
    <property type="expression patterns" value="baseline and differential"/>
</dbReference>
<dbReference type="GO" id="GO:0000785">
    <property type="term" value="C:chromatin"/>
    <property type="evidence" value="ECO:0000318"/>
    <property type="project" value="GO_Central"/>
</dbReference>
<dbReference type="GO" id="GO:0005737">
    <property type="term" value="C:cytoplasm"/>
    <property type="evidence" value="ECO:0000314"/>
    <property type="project" value="UniProtKB"/>
</dbReference>
<dbReference type="GO" id="GO:0005652">
    <property type="term" value="C:nuclear lamina"/>
    <property type="evidence" value="ECO:0000314"/>
    <property type="project" value="UniProtKB"/>
</dbReference>
<dbReference type="GO" id="GO:0005634">
    <property type="term" value="C:nucleus"/>
    <property type="evidence" value="ECO:0000314"/>
    <property type="project" value="UniProtKB"/>
</dbReference>
<dbReference type="GO" id="GO:0008236">
    <property type="term" value="F:serine-type peptidase activity"/>
    <property type="evidence" value="ECO:0000314"/>
    <property type="project" value="UniProtKB"/>
</dbReference>
<dbReference type="GO" id="GO:0006260">
    <property type="term" value="P:DNA replication"/>
    <property type="evidence" value="ECO:0000318"/>
    <property type="project" value="GO_Central"/>
</dbReference>
<dbReference type="GO" id="GO:0006508">
    <property type="term" value="P:proteolysis"/>
    <property type="evidence" value="ECO:0007669"/>
    <property type="project" value="UniProtKB-KW"/>
</dbReference>
<dbReference type="Gene3D" id="2.40.10.10">
    <property type="entry name" value="Trypsin-like serine proteases"/>
    <property type="match status" value="2"/>
</dbReference>
<dbReference type="InterPro" id="IPR009003">
    <property type="entry name" value="Peptidase_S1_PA"/>
</dbReference>
<dbReference type="InterPro" id="IPR043504">
    <property type="entry name" value="Peptidase_S1_PA_chymotrypsin"/>
</dbReference>
<dbReference type="PANTHER" id="PTHR14389:SF4">
    <property type="entry name" value="SERINE PROTEASE FAM111B"/>
    <property type="match status" value="1"/>
</dbReference>
<dbReference type="PANTHER" id="PTHR14389">
    <property type="entry name" value="SI:CH1073-475A24.1"/>
    <property type="match status" value="1"/>
</dbReference>
<dbReference type="Pfam" id="PF13365">
    <property type="entry name" value="Trypsin_2"/>
    <property type="match status" value="1"/>
</dbReference>
<dbReference type="SUPFAM" id="SSF50494">
    <property type="entry name" value="Trypsin-like serine proteases"/>
    <property type="match status" value="1"/>
</dbReference>
<comment type="function">
    <text evidence="2">Serine protease.</text>
</comment>
<comment type="interaction">
    <interactant intactId="EBI-6309082">
        <id>Q6SJ93</id>
    </interactant>
    <interactant intactId="EBI-10968534">
        <id>P50570-2</id>
        <label>DNM2</label>
    </interactant>
    <organismsDiffer>false</organismsDiffer>
    <experiments>3</experiments>
</comment>
<comment type="interaction">
    <interactant intactId="EBI-6309082">
        <id>Q6SJ93</id>
    </interactant>
    <interactant intactId="EBI-747754">
        <id>P28799</id>
        <label>GRN</label>
    </interactant>
    <organismsDiffer>false</organismsDiffer>
    <experiments>3</experiments>
</comment>
<comment type="interaction">
    <interactant intactId="EBI-6309082">
        <id>Q6SJ93</id>
    </interactant>
    <interactant intactId="EBI-466029">
        <id>P42858</id>
        <label>HTT</label>
    </interactant>
    <organismsDiffer>false</organismsDiffer>
    <experiments>12</experiments>
</comment>
<comment type="interaction">
    <interactant intactId="EBI-6309082">
        <id>Q6SJ93</id>
    </interactant>
    <interactant intactId="EBI-1053182">
        <id>Q01105</id>
        <label>SET</label>
    </interactant>
    <organismsDiffer>false</organismsDiffer>
    <experiments>4</experiments>
</comment>
<comment type="interaction">
    <interactant intactId="EBI-6309082">
        <id>Q6SJ93</id>
    </interactant>
    <interactant intactId="EBI-7481343">
        <id>Q01105-2</id>
        <label>SET</label>
    </interactant>
    <organismsDiffer>false</organismsDiffer>
    <experiments>3</experiments>
</comment>
<comment type="interaction">
    <interactant intactId="EBI-6309082">
        <id>Q6SJ93</id>
    </interactant>
    <interactant intactId="EBI-720609">
        <id>O76024</id>
        <label>WFS1</label>
    </interactant>
    <organismsDiffer>false</organismsDiffer>
    <experiments>3</experiments>
</comment>
<comment type="alternative products">
    <event type="alternative splicing"/>
    <isoform>
        <id>Q6SJ93-1</id>
        <name>1</name>
        <sequence type="displayed"/>
    </isoform>
    <isoform>
        <id>Q6SJ93-2</id>
        <name>2</name>
        <sequence type="described" ref="VSP_022739"/>
    </isoform>
</comment>
<comment type="tissue specificity">
    <text evidence="4">Widely expressed.</text>
</comment>
<comment type="disease" evidence="4">
    <disease id="DI-04046">
        <name>Poikiloderma, hereditary fibrosing, with tendon contractures, myopathy, and pulmonary fibrosis</name>
        <acronym>POIKTMP</acronym>
        <description>An autosomal dominant form of hereditary poikiloderma, a genodermatosis characterized by mottled pigmentation, telangiectasia, and epidermal atrophy. POIKTMP features include tendon contracture, myopathy, and progressive pulmonary fibrosis. It manifests from early childhood with telangiectasia and pigmentary anomalies especially on the face and sun-exposed areas, tendon contractures that particularly involve the ankles and feet causing gait disturbance, and development of pulmonary fibrosis during the second decade of life resulting in progressive dyspnea and restrictive impairment of lung function.</description>
        <dbReference type="MIM" id="615704"/>
    </disease>
    <text>The disease is caused by variants affecting the gene represented in this entry.</text>
</comment>
<comment type="similarity">
    <text evidence="7">Belongs to the FAM111 family.</text>
</comment>
<comment type="sequence caution" evidence="7">
    <conflict type="miscellaneous discrepancy">
        <sequence resource="EMBL-CDS" id="AAH62456"/>
    </conflict>
    <text>Contaminating sequence. Potential poly-A sequence.</text>
</comment>
<evidence type="ECO:0000250" key="1">
    <source>
        <dbReference type="UniProtKB" id="P06681"/>
    </source>
</evidence>
<evidence type="ECO:0000250" key="2">
    <source>
        <dbReference type="UniProtKB" id="Q96PZ2"/>
    </source>
</evidence>
<evidence type="ECO:0000256" key="3">
    <source>
        <dbReference type="SAM" id="MobiDB-lite"/>
    </source>
</evidence>
<evidence type="ECO:0000269" key="4">
    <source>
    </source>
</evidence>
<evidence type="ECO:0000303" key="5">
    <source>
    </source>
</evidence>
<evidence type="ECO:0000303" key="6">
    <source ref="1"/>
</evidence>
<evidence type="ECO:0000305" key="7"/>
<evidence type="ECO:0000312" key="8">
    <source>
        <dbReference type="HGNC" id="HGNC:24200"/>
    </source>
</evidence>
<evidence type="ECO:0007744" key="9">
    <source>
    </source>
</evidence>
<evidence type="ECO:0007744" key="10">
    <source>
    </source>
</evidence>
<organism>
    <name type="scientific">Homo sapiens</name>
    <name type="common">Human</name>
    <dbReference type="NCBI Taxonomy" id="9606"/>
    <lineage>
        <taxon>Eukaryota</taxon>
        <taxon>Metazoa</taxon>
        <taxon>Chordata</taxon>
        <taxon>Craniata</taxon>
        <taxon>Vertebrata</taxon>
        <taxon>Euteleostomi</taxon>
        <taxon>Mammalia</taxon>
        <taxon>Eutheria</taxon>
        <taxon>Euarchontoglires</taxon>
        <taxon>Primates</taxon>
        <taxon>Haplorrhini</taxon>
        <taxon>Catarrhini</taxon>
        <taxon>Hominidae</taxon>
        <taxon>Homo</taxon>
    </lineage>
</organism>
<gene>
    <name evidence="8" type="primary">FAM111B</name>
    <name evidence="6" type="synonym">CANP</name>
</gene>
<protein>
    <recommendedName>
        <fullName evidence="7">Serine protease FAM111B</fullName>
        <ecNumber evidence="2">3.4.21.-</ecNumber>
    </recommendedName>
    <alternativeName>
        <fullName evidence="6">Cancer-associated nucleoprotein</fullName>
    </alternativeName>
</protein>